<organism>
    <name type="scientific">Acinetobacter baumannii (strain SDF)</name>
    <dbReference type="NCBI Taxonomy" id="509170"/>
    <lineage>
        <taxon>Bacteria</taxon>
        <taxon>Pseudomonadati</taxon>
        <taxon>Pseudomonadota</taxon>
        <taxon>Gammaproteobacteria</taxon>
        <taxon>Moraxellales</taxon>
        <taxon>Moraxellaceae</taxon>
        <taxon>Acinetobacter</taxon>
        <taxon>Acinetobacter calcoaceticus/baumannii complex</taxon>
    </lineage>
</organism>
<protein>
    <recommendedName>
        <fullName evidence="1">Threonine--tRNA ligase</fullName>
        <ecNumber evidence="1">6.1.1.3</ecNumber>
    </recommendedName>
    <alternativeName>
        <fullName evidence="1">Threonyl-tRNA synthetase</fullName>
        <shortName evidence="1">ThrRS</shortName>
    </alternativeName>
</protein>
<accession>B0VKJ4</accession>
<proteinExistence type="inferred from homology"/>
<keyword id="KW-0030">Aminoacyl-tRNA synthetase</keyword>
<keyword id="KW-0067">ATP-binding</keyword>
<keyword id="KW-0963">Cytoplasm</keyword>
<keyword id="KW-0436">Ligase</keyword>
<keyword id="KW-0479">Metal-binding</keyword>
<keyword id="KW-0547">Nucleotide-binding</keyword>
<keyword id="KW-0648">Protein biosynthesis</keyword>
<keyword id="KW-0694">RNA-binding</keyword>
<keyword id="KW-0820">tRNA-binding</keyword>
<keyword id="KW-0862">Zinc</keyword>
<gene>
    <name evidence="1" type="primary">thrS</name>
    <name type="ordered locus">ABSDF2923</name>
</gene>
<dbReference type="EC" id="6.1.1.3" evidence="1"/>
<dbReference type="EMBL" id="CU468230">
    <property type="protein sequence ID" value="CAP02213.1"/>
    <property type="molecule type" value="Genomic_DNA"/>
</dbReference>
<dbReference type="SMR" id="B0VKJ4"/>
<dbReference type="KEGG" id="abm:ABSDF2923"/>
<dbReference type="HOGENOM" id="CLU_008554_0_1_6"/>
<dbReference type="Proteomes" id="UP000001741">
    <property type="component" value="Chromosome"/>
</dbReference>
<dbReference type="GO" id="GO:0005829">
    <property type="term" value="C:cytosol"/>
    <property type="evidence" value="ECO:0007669"/>
    <property type="project" value="TreeGrafter"/>
</dbReference>
<dbReference type="GO" id="GO:0005524">
    <property type="term" value="F:ATP binding"/>
    <property type="evidence" value="ECO:0007669"/>
    <property type="project" value="UniProtKB-UniRule"/>
</dbReference>
<dbReference type="GO" id="GO:0046872">
    <property type="term" value="F:metal ion binding"/>
    <property type="evidence" value="ECO:0007669"/>
    <property type="project" value="UniProtKB-KW"/>
</dbReference>
<dbReference type="GO" id="GO:0004829">
    <property type="term" value="F:threonine-tRNA ligase activity"/>
    <property type="evidence" value="ECO:0007669"/>
    <property type="project" value="UniProtKB-UniRule"/>
</dbReference>
<dbReference type="GO" id="GO:0000049">
    <property type="term" value="F:tRNA binding"/>
    <property type="evidence" value="ECO:0007669"/>
    <property type="project" value="UniProtKB-KW"/>
</dbReference>
<dbReference type="GO" id="GO:0006435">
    <property type="term" value="P:threonyl-tRNA aminoacylation"/>
    <property type="evidence" value="ECO:0007669"/>
    <property type="project" value="UniProtKB-UniRule"/>
</dbReference>
<dbReference type="CDD" id="cd01667">
    <property type="entry name" value="TGS_ThrRS"/>
    <property type="match status" value="1"/>
</dbReference>
<dbReference type="CDD" id="cd00860">
    <property type="entry name" value="ThrRS_anticodon"/>
    <property type="match status" value="1"/>
</dbReference>
<dbReference type="CDD" id="cd00771">
    <property type="entry name" value="ThrRS_core"/>
    <property type="match status" value="1"/>
</dbReference>
<dbReference type="FunFam" id="3.10.20.30:FF:000005">
    <property type="entry name" value="Threonine--tRNA ligase"/>
    <property type="match status" value="1"/>
</dbReference>
<dbReference type="FunFam" id="3.30.54.20:FF:000002">
    <property type="entry name" value="Threonine--tRNA ligase"/>
    <property type="match status" value="1"/>
</dbReference>
<dbReference type="FunFam" id="3.30.930.10:FF:000002">
    <property type="entry name" value="Threonine--tRNA ligase"/>
    <property type="match status" value="1"/>
</dbReference>
<dbReference type="FunFam" id="3.40.50.800:FF:000001">
    <property type="entry name" value="Threonine--tRNA ligase"/>
    <property type="match status" value="1"/>
</dbReference>
<dbReference type="FunFam" id="3.30.980.10:FF:000005">
    <property type="entry name" value="Threonyl-tRNA synthetase, mitochondrial"/>
    <property type="match status" value="1"/>
</dbReference>
<dbReference type="Gene3D" id="3.10.20.30">
    <property type="match status" value="1"/>
</dbReference>
<dbReference type="Gene3D" id="3.30.54.20">
    <property type="match status" value="1"/>
</dbReference>
<dbReference type="Gene3D" id="3.40.50.800">
    <property type="entry name" value="Anticodon-binding domain"/>
    <property type="match status" value="1"/>
</dbReference>
<dbReference type="Gene3D" id="3.30.930.10">
    <property type="entry name" value="Bira Bifunctional Protein, Domain 2"/>
    <property type="match status" value="1"/>
</dbReference>
<dbReference type="Gene3D" id="3.30.980.10">
    <property type="entry name" value="Threonyl-trna Synthetase, Chain A, domain 2"/>
    <property type="match status" value="1"/>
</dbReference>
<dbReference type="HAMAP" id="MF_00184">
    <property type="entry name" value="Thr_tRNA_synth"/>
    <property type="match status" value="1"/>
</dbReference>
<dbReference type="InterPro" id="IPR002314">
    <property type="entry name" value="aa-tRNA-synt_IIb"/>
</dbReference>
<dbReference type="InterPro" id="IPR006195">
    <property type="entry name" value="aa-tRNA-synth_II"/>
</dbReference>
<dbReference type="InterPro" id="IPR045864">
    <property type="entry name" value="aa-tRNA-synth_II/BPL/LPL"/>
</dbReference>
<dbReference type="InterPro" id="IPR004154">
    <property type="entry name" value="Anticodon-bd"/>
</dbReference>
<dbReference type="InterPro" id="IPR036621">
    <property type="entry name" value="Anticodon-bd_dom_sf"/>
</dbReference>
<dbReference type="InterPro" id="IPR012675">
    <property type="entry name" value="Beta-grasp_dom_sf"/>
</dbReference>
<dbReference type="InterPro" id="IPR004095">
    <property type="entry name" value="TGS"/>
</dbReference>
<dbReference type="InterPro" id="IPR012676">
    <property type="entry name" value="TGS-like"/>
</dbReference>
<dbReference type="InterPro" id="IPR002320">
    <property type="entry name" value="Thr-tRNA-ligase_IIa"/>
</dbReference>
<dbReference type="InterPro" id="IPR018163">
    <property type="entry name" value="Thr/Ala-tRNA-synth_IIc_edit"/>
</dbReference>
<dbReference type="InterPro" id="IPR047246">
    <property type="entry name" value="ThrRS_anticodon"/>
</dbReference>
<dbReference type="InterPro" id="IPR033728">
    <property type="entry name" value="ThrRS_core"/>
</dbReference>
<dbReference type="InterPro" id="IPR012947">
    <property type="entry name" value="tRNA_SAD"/>
</dbReference>
<dbReference type="NCBIfam" id="TIGR00418">
    <property type="entry name" value="thrS"/>
    <property type="match status" value="1"/>
</dbReference>
<dbReference type="PANTHER" id="PTHR11451:SF44">
    <property type="entry name" value="THREONINE--TRNA LIGASE, CHLOROPLASTIC_MITOCHONDRIAL 2"/>
    <property type="match status" value="1"/>
</dbReference>
<dbReference type="PANTHER" id="PTHR11451">
    <property type="entry name" value="THREONINE-TRNA LIGASE"/>
    <property type="match status" value="1"/>
</dbReference>
<dbReference type="Pfam" id="PF03129">
    <property type="entry name" value="HGTP_anticodon"/>
    <property type="match status" value="1"/>
</dbReference>
<dbReference type="Pfam" id="PF02824">
    <property type="entry name" value="TGS"/>
    <property type="match status" value="1"/>
</dbReference>
<dbReference type="Pfam" id="PF00587">
    <property type="entry name" value="tRNA-synt_2b"/>
    <property type="match status" value="1"/>
</dbReference>
<dbReference type="Pfam" id="PF07973">
    <property type="entry name" value="tRNA_SAD"/>
    <property type="match status" value="1"/>
</dbReference>
<dbReference type="PRINTS" id="PR01047">
    <property type="entry name" value="TRNASYNTHTHR"/>
</dbReference>
<dbReference type="SMART" id="SM00863">
    <property type="entry name" value="tRNA_SAD"/>
    <property type="match status" value="1"/>
</dbReference>
<dbReference type="SUPFAM" id="SSF52954">
    <property type="entry name" value="Class II aaRS ABD-related"/>
    <property type="match status" value="1"/>
</dbReference>
<dbReference type="SUPFAM" id="SSF55681">
    <property type="entry name" value="Class II aaRS and biotin synthetases"/>
    <property type="match status" value="1"/>
</dbReference>
<dbReference type="SUPFAM" id="SSF81271">
    <property type="entry name" value="TGS-like"/>
    <property type="match status" value="1"/>
</dbReference>
<dbReference type="SUPFAM" id="SSF55186">
    <property type="entry name" value="ThrRS/AlaRS common domain"/>
    <property type="match status" value="1"/>
</dbReference>
<dbReference type="PROSITE" id="PS50862">
    <property type="entry name" value="AA_TRNA_LIGASE_II"/>
    <property type="match status" value="1"/>
</dbReference>
<dbReference type="PROSITE" id="PS51880">
    <property type="entry name" value="TGS"/>
    <property type="match status" value="1"/>
</dbReference>
<comment type="function">
    <text evidence="1">Catalyzes the attachment of threonine to tRNA(Thr) in a two-step reaction: L-threonine is first activated by ATP to form Thr-AMP and then transferred to the acceptor end of tRNA(Thr). Also edits incorrectly charged L-seryl-tRNA(Thr).</text>
</comment>
<comment type="catalytic activity">
    <reaction evidence="1">
        <text>tRNA(Thr) + L-threonine + ATP = L-threonyl-tRNA(Thr) + AMP + diphosphate + H(+)</text>
        <dbReference type="Rhea" id="RHEA:24624"/>
        <dbReference type="Rhea" id="RHEA-COMP:9670"/>
        <dbReference type="Rhea" id="RHEA-COMP:9704"/>
        <dbReference type="ChEBI" id="CHEBI:15378"/>
        <dbReference type="ChEBI" id="CHEBI:30616"/>
        <dbReference type="ChEBI" id="CHEBI:33019"/>
        <dbReference type="ChEBI" id="CHEBI:57926"/>
        <dbReference type="ChEBI" id="CHEBI:78442"/>
        <dbReference type="ChEBI" id="CHEBI:78534"/>
        <dbReference type="ChEBI" id="CHEBI:456215"/>
        <dbReference type="EC" id="6.1.1.3"/>
    </reaction>
</comment>
<comment type="cofactor">
    <cofactor evidence="1">
        <name>Zn(2+)</name>
        <dbReference type="ChEBI" id="CHEBI:29105"/>
    </cofactor>
    <text evidence="1">Binds 1 zinc ion per subunit.</text>
</comment>
<comment type="subunit">
    <text evidence="1">Homodimer.</text>
</comment>
<comment type="subcellular location">
    <subcellularLocation>
        <location evidence="1">Cytoplasm</location>
    </subcellularLocation>
</comment>
<comment type="similarity">
    <text evidence="1">Belongs to the class-II aminoacyl-tRNA synthetase family.</text>
</comment>
<evidence type="ECO:0000255" key="1">
    <source>
        <dbReference type="HAMAP-Rule" id="MF_00184"/>
    </source>
</evidence>
<evidence type="ECO:0000255" key="2">
    <source>
        <dbReference type="PROSITE-ProRule" id="PRU01228"/>
    </source>
</evidence>
<feature type="chain" id="PRO_1000098534" description="Threonine--tRNA ligase">
    <location>
        <begin position="1"/>
        <end position="640"/>
    </location>
</feature>
<feature type="domain" description="TGS" evidence="2">
    <location>
        <begin position="1"/>
        <end position="61"/>
    </location>
</feature>
<feature type="region of interest" description="Catalytic" evidence="1">
    <location>
        <begin position="242"/>
        <end position="533"/>
    </location>
</feature>
<feature type="binding site" evidence="1">
    <location>
        <position position="333"/>
    </location>
    <ligand>
        <name>Zn(2+)</name>
        <dbReference type="ChEBI" id="CHEBI:29105"/>
    </ligand>
</feature>
<feature type="binding site" evidence="1">
    <location>
        <position position="384"/>
    </location>
    <ligand>
        <name>Zn(2+)</name>
        <dbReference type="ChEBI" id="CHEBI:29105"/>
    </ligand>
</feature>
<feature type="binding site" evidence="1">
    <location>
        <position position="510"/>
    </location>
    <ligand>
        <name>Zn(2+)</name>
        <dbReference type="ChEBI" id="CHEBI:29105"/>
    </ligand>
</feature>
<name>SYT_ACIBS</name>
<reference key="1">
    <citation type="journal article" date="2008" name="PLoS ONE">
        <title>Comparative analysis of Acinetobacters: three genomes for three lifestyles.</title>
        <authorList>
            <person name="Vallenet D."/>
            <person name="Nordmann P."/>
            <person name="Barbe V."/>
            <person name="Poirel L."/>
            <person name="Mangenot S."/>
            <person name="Bataille E."/>
            <person name="Dossat C."/>
            <person name="Gas S."/>
            <person name="Kreimeyer A."/>
            <person name="Lenoble P."/>
            <person name="Oztas S."/>
            <person name="Poulain J."/>
            <person name="Segurens B."/>
            <person name="Robert C."/>
            <person name="Abergel C."/>
            <person name="Claverie J.-M."/>
            <person name="Raoult D."/>
            <person name="Medigue C."/>
            <person name="Weissenbach J."/>
            <person name="Cruveiller S."/>
        </authorList>
    </citation>
    <scope>NUCLEOTIDE SEQUENCE [LARGE SCALE GENOMIC DNA]</scope>
    <source>
        <strain>SDF</strain>
    </source>
</reference>
<sequence>MPIITLPNGDQKSFDHPVSVMEVAQSIGPGLAKNTVAGRVNDRLVDACDLITEDSTLQIITPKDEEGLEIIRHSCAHLVGHAVKQLFPEAKMVIGPVIEEGFYYDIWMPCPFTLDDMAAIEERMKKLIDQDYDVIKKMTPRDEVIKVFTDRGEEYKLRLVEDMPEEKAMGLYYHQEYVDMCRGPHVPNTKFLKSFKLTKISGAYWRGDAKNEQLQRIYGTAWADKKQLAAYIKRIEEAENRDHRKIGKALDLFHMQEEAPGMVFWHANGWTIYQVLEQYMRKVQQDNGYQEIKTPQIVDFTLWEKSGHAANYAENMFTTHSESRNYAVKPMNCPCHVQVFNQGLKSYRDLPIRLAEFGSCHRNEPSGSLHGIMRVRGFTQDDAHIFCTKEQIGKEVADFIKLTLDVYKDFGFEEVQMKLSTRPEKRVGDDALWDLAEKSLADALDAAGLEWELQPGEGAFYGPKIEFSLKDCLGRVWQCGTIQCDFNLPVRLDASYVTEENERDQPVMLHRAILGSFERFIGILIEHYAGFMPPWLSPVQACVMNITDSQAEASEQVVAKLKENGLRAISDLRNEKIGFKIRERTLERIPYLLVLGDREVEEGTVNVRTRSGKNLGTMSVDAFIDLVKSAVAERGRYIVE</sequence>